<feature type="chain" id="PRO_0000119596" description="Glutamate--tRNA ligase">
    <location>
        <begin position="1"/>
        <end position="482"/>
    </location>
</feature>
<feature type="short sequence motif" description="'HIGH' region" evidence="1">
    <location>
        <begin position="10"/>
        <end position="20"/>
    </location>
</feature>
<feature type="short sequence motif" description="'KMSKS' region" evidence="1">
    <location>
        <begin position="253"/>
        <end position="257"/>
    </location>
</feature>
<feature type="binding site" evidence="1">
    <location>
        <position position="256"/>
    </location>
    <ligand>
        <name>ATP</name>
        <dbReference type="ChEBI" id="CHEBI:30616"/>
    </ligand>
</feature>
<dbReference type="EC" id="6.1.1.17" evidence="1"/>
<dbReference type="EMBL" id="AE017263">
    <property type="protein sequence ID" value="AAT76007.1"/>
    <property type="molecule type" value="Genomic_DNA"/>
</dbReference>
<dbReference type="RefSeq" id="WP_011183547.1">
    <property type="nucleotide sequence ID" value="NC_006055.1"/>
</dbReference>
<dbReference type="RefSeq" id="YP_053891.1">
    <property type="nucleotide sequence ID" value="NC_006055.1"/>
</dbReference>
<dbReference type="SMR" id="Q6F0G6"/>
<dbReference type="STRING" id="265311.Mfl651"/>
<dbReference type="PaxDb" id="265311-Mfl651"/>
<dbReference type="EnsemblBacteria" id="AAT76007">
    <property type="protein sequence ID" value="AAT76007"/>
    <property type="gene ID" value="Mfl651"/>
</dbReference>
<dbReference type="GeneID" id="2898181"/>
<dbReference type="KEGG" id="mfl:Mfl651"/>
<dbReference type="PATRIC" id="fig|265311.5.peg.653"/>
<dbReference type="eggNOG" id="COG0008">
    <property type="taxonomic scope" value="Bacteria"/>
</dbReference>
<dbReference type="HOGENOM" id="CLU_015768_6_1_14"/>
<dbReference type="OrthoDB" id="9807503at2"/>
<dbReference type="Proteomes" id="UP000006647">
    <property type="component" value="Chromosome"/>
</dbReference>
<dbReference type="GO" id="GO:0005829">
    <property type="term" value="C:cytosol"/>
    <property type="evidence" value="ECO:0007669"/>
    <property type="project" value="TreeGrafter"/>
</dbReference>
<dbReference type="GO" id="GO:0005524">
    <property type="term" value="F:ATP binding"/>
    <property type="evidence" value="ECO:0007669"/>
    <property type="project" value="UniProtKB-UniRule"/>
</dbReference>
<dbReference type="GO" id="GO:0004818">
    <property type="term" value="F:glutamate-tRNA ligase activity"/>
    <property type="evidence" value="ECO:0007669"/>
    <property type="project" value="UniProtKB-UniRule"/>
</dbReference>
<dbReference type="GO" id="GO:0000049">
    <property type="term" value="F:tRNA binding"/>
    <property type="evidence" value="ECO:0007669"/>
    <property type="project" value="InterPro"/>
</dbReference>
<dbReference type="GO" id="GO:0008270">
    <property type="term" value="F:zinc ion binding"/>
    <property type="evidence" value="ECO:0007669"/>
    <property type="project" value="InterPro"/>
</dbReference>
<dbReference type="GO" id="GO:0006424">
    <property type="term" value="P:glutamyl-tRNA aminoacylation"/>
    <property type="evidence" value="ECO:0007669"/>
    <property type="project" value="UniProtKB-UniRule"/>
</dbReference>
<dbReference type="CDD" id="cd00808">
    <property type="entry name" value="GluRS_core"/>
    <property type="match status" value="1"/>
</dbReference>
<dbReference type="FunFam" id="3.40.50.620:FF:000007">
    <property type="entry name" value="Glutamate--tRNA ligase"/>
    <property type="match status" value="1"/>
</dbReference>
<dbReference type="Gene3D" id="1.10.10.350">
    <property type="match status" value="1"/>
</dbReference>
<dbReference type="Gene3D" id="3.40.50.620">
    <property type="entry name" value="HUPs"/>
    <property type="match status" value="1"/>
</dbReference>
<dbReference type="HAMAP" id="MF_00022">
    <property type="entry name" value="Glu_tRNA_synth_type1"/>
    <property type="match status" value="1"/>
</dbReference>
<dbReference type="InterPro" id="IPR045462">
    <property type="entry name" value="aa-tRNA-synth_I_cd-bd"/>
</dbReference>
<dbReference type="InterPro" id="IPR020751">
    <property type="entry name" value="aa-tRNA-synth_I_codon-bd_sub2"/>
</dbReference>
<dbReference type="InterPro" id="IPR001412">
    <property type="entry name" value="aa-tRNA-synth_I_CS"/>
</dbReference>
<dbReference type="InterPro" id="IPR008925">
    <property type="entry name" value="aa_tRNA-synth_I_cd-bd_sf"/>
</dbReference>
<dbReference type="InterPro" id="IPR004527">
    <property type="entry name" value="Glu-tRNA-ligase_bac/mito"/>
</dbReference>
<dbReference type="InterPro" id="IPR000924">
    <property type="entry name" value="Glu/Gln-tRNA-synth"/>
</dbReference>
<dbReference type="InterPro" id="IPR020058">
    <property type="entry name" value="Glu/Gln-tRNA-synth_Ib_cat-dom"/>
</dbReference>
<dbReference type="InterPro" id="IPR049940">
    <property type="entry name" value="GluQ/Sye"/>
</dbReference>
<dbReference type="InterPro" id="IPR033910">
    <property type="entry name" value="GluRS_core"/>
</dbReference>
<dbReference type="InterPro" id="IPR014729">
    <property type="entry name" value="Rossmann-like_a/b/a_fold"/>
</dbReference>
<dbReference type="NCBIfam" id="TIGR00464">
    <property type="entry name" value="gltX_bact"/>
    <property type="match status" value="1"/>
</dbReference>
<dbReference type="PANTHER" id="PTHR43311">
    <property type="entry name" value="GLUTAMATE--TRNA LIGASE"/>
    <property type="match status" value="1"/>
</dbReference>
<dbReference type="PANTHER" id="PTHR43311:SF2">
    <property type="entry name" value="GLUTAMATE--TRNA LIGASE, MITOCHONDRIAL-RELATED"/>
    <property type="match status" value="1"/>
</dbReference>
<dbReference type="Pfam" id="PF19269">
    <property type="entry name" value="Anticodon_2"/>
    <property type="match status" value="1"/>
</dbReference>
<dbReference type="Pfam" id="PF00749">
    <property type="entry name" value="tRNA-synt_1c"/>
    <property type="match status" value="1"/>
</dbReference>
<dbReference type="PRINTS" id="PR00987">
    <property type="entry name" value="TRNASYNTHGLU"/>
</dbReference>
<dbReference type="SUPFAM" id="SSF48163">
    <property type="entry name" value="An anticodon-binding domain of class I aminoacyl-tRNA synthetases"/>
    <property type="match status" value="1"/>
</dbReference>
<dbReference type="SUPFAM" id="SSF52374">
    <property type="entry name" value="Nucleotidylyl transferase"/>
    <property type="match status" value="1"/>
</dbReference>
<dbReference type="PROSITE" id="PS00178">
    <property type="entry name" value="AA_TRNA_LIGASE_I"/>
    <property type="match status" value="1"/>
</dbReference>
<gene>
    <name evidence="1" type="primary">gltX</name>
    <name type="ordered locus">Mfl651</name>
</gene>
<evidence type="ECO:0000255" key="1">
    <source>
        <dbReference type="HAMAP-Rule" id="MF_00022"/>
    </source>
</evidence>
<name>SYE_MESFL</name>
<accession>Q6F0G6</accession>
<reference key="1">
    <citation type="submission" date="2004-06" db="EMBL/GenBank/DDBJ databases">
        <authorList>
            <person name="Birren B.W."/>
            <person name="Stange-Thomann N."/>
            <person name="Hafez N."/>
            <person name="DeCaprio D."/>
            <person name="Fisher S."/>
            <person name="Butler J."/>
            <person name="Elkins T."/>
            <person name="Kodira C.D."/>
            <person name="Major J."/>
            <person name="Wang S."/>
            <person name="Nicol R."/>
            <person name="Nusbaum C."/>
        </authorList>
    </citation>
    <scope>NUCLEOTIDE SEQUENCE [LARGE SCALE GENOMIC DNA]</scope>
    <source>
        <strain>ATCC 33453 / NBRC 100688 / NCTC 11704 / L1</strain>
    </source>
</reference>
<keyword id="KW-0030">Aminoacyl-tRNA synthetase</keyword>
<keyword id="KW-0067">ATP-binding</keyword>
<keyword id="KW-0963">Cytoplasm</keyword>
<keyword id="KW-0436">Ligase</keyword>
<keyword id="KW-0547">Nucleotide-binding</keyword>
<keyword id="KW-0648">Protein biosynthesis</keyword>
<keyword id="KW-1185">Reference proteome</keyword>
<proteinExistence type="inferred from homology"/>
<sequence length="482" mass="55805">MTKFRLRYAPSPTGFLHIGNTRTALMNYLFAKHYNGDFIVRIEDTDLERNVEGAIESQFENLNWLGINADESFLKPGEEKYGKYMQSQKFGRYQELAEKLISIKKAYRCFCTTEELEKDYEDQVAKGIVATKYSGKCSRLSESEIESNLKSNKDFSIRFLVPETTLNIKDFIKGEITFDSKELGDFVILKTNKIATYNFAVVVDDFDMEISHVLRGEEHISNTPRQILIYQAFGWETPQFGHMSLIVDSTGKKLSKRSGNALFFIEQYKNQGYLPEAMFNYISLLGWSPIGEKELLTKQELISMFDDKRFSKSPSTFDMTKMKWINSQYMKALSEEEYLEFTKKYINTEMFNTKEKSEDWLNQVLLLFKKELEFADQINNHLNIFFNEVDVTSETIEILKTIEEHESVIKEFETQISTLNEWEIENIKSLIKLVSENTGKKGKDLFMPIRIASSSSEHGPSLADVIYLLGKDKVLANIAKVK</sequence>
<comment type="function">
    <text evidence="1">Catalyzes the attachment of glutamate to tRNA(Glu) in a two-step reaction: glutamate is first activated by ATP to form Glu-AMP and then transferred to the acceptor end of tRNA(Glu).</text>
</comment>
<comment type="catalytic activity">
    <reaction evidence="1">
        <text>tRNA(Glu) + L-glutamate + ATP = L-glutamyl-tRNA(Glu) + AMP + diphosphate</text>
        <dbReference type="Rhea" id="RHEA:23540"/>
        <dbReference type="Rhea" id="RHEA-COMP:9663"/>
        <dbReference type="Rhea" id="RHEA-COMP:9680"/>
        <dbReference type="ChEBI" id="CHEBI:29985"/>
        <dbReference type="ChEBI" id="CHEBI:30616"/>
        <dbReference type="ChEBI" id="CHEBI:33019"/>
        <dbReference type="ChEBI" id="CHEBI:78442"/>
        <dbReference type="ChEBI" id="CHEBI:78520"/>
        <dbReference type="ChEBI" id="CHEBI:456215"/>
        <dbReference type="EC" id="6.1.1.17"/>
    </reaction>
</comment>
<comment type="subunit">
    <text evidence="1">Monomer.</text>
</comment>
<comment type="subcellular location">
    <subcellularLocation>
        <location evidence="1">Cytoplasm</location>
    </subcellularLocation>
</comment>
<comment type="similarity">
    <text evidence="1">Belongs to the class-I aminoacyl-tRNA synthetase family. Glutamate--tRNA ligase type 1 subfamily.</text>
</comment>
<organism>
    <name type="scientific">Mesoplasma florum (strain ATCC 33453 / NBRC 100688 / NCTC 11704 / L1)</name>
    <name type="common">Acholeplasma florum</name>
    <dbReference type="NCBI Taxonomy" id="265311"/>
    <lineage>
        <taxon>Bacteria</taxon>
        <taxon>Bacillati</taxon>
        <taxon>Mycoplasmatota</taxon>
        <taxon>Mollicutes</taxon>
        <taxon>Entomoplasmatales</taxon>
        <taxon>Entomoplasmataceae</taxon>
        <taxon>Mesoplasma</taxon>
    </lineage>
</organism>
<protein>
    <recommendedName>
        <fullName evidence="1">Glutamate--tRNA ligase</fullName>
        <ecNumber evidence="1">6.1.1.17</ecNumber>
    </recommendedName>
    <alternativeName>
        <fullName evidence="1">Glutamyl-tRNA synthetase</fullName>
        <shortName evidence="1">GluRS</shortName>
    </alternativeName>
</protein>